<feature type="chain" id="PRO_0000454034" description="Probable xylan O-acetyltransferase 10">
    <location>
        <begin position="1"/>
        <end position="441"/>
    </location>
</feature>
<feature type="topological domain" description="Cytoplasmic" evidence="9">
    <location>
        <begin position="1"/>
        <end position="19"/>
    </location>
</feature>
<feature type="transmembrane region" description="Helical; Signal-anchor for type II membrane protein" evidence="3">
    <location>
        <begin position="20"/>
        <end position="40"/>
    </location>
</feature>
<feature type="topological domain" description="Lumenal" evidence="9">
    <location>
        <begin position="41"/>
        <end position="441"/>
    </location>
</feature>
<feature type="region of interest" description="Disordered" evidence="5">
    <location>
        <begin position="50"/>
        <end position="81"/>
    </location>
</feature>
<feature type="short sequence motif" description="GDS motif" evidence="10">
    <location>
        <begin position="171"/>
        <end position="173"/>
    </location>
</feature>
<feature type="short sequence motif" description="DXXH motif" evidence="10">
    <location>
        <begin position="417"/>
        <end position="420"/>
    </location>
</feature>
<feature type="compositionally biased region" description="Basic residues" evidence="5">
    <location>
        <begin position="56"/>
        <end position="73"/>
    </location>
</feature>
<feature type="active site" description="Nucleophile" evidence="2">
    <location>
        <position position="173"/>
    </location>
</feature>
<feature type="active site" description="Proton donor" evidence="2">
    <location>
        <position position="417"/>
    </location>
</feature>
<feature type="active site" description="Proton acceptor" evidence="2">
    <location>
        <position position="420"/>
    </location>
</feature>
<feature type="glycosylation site" description="N-linked (GlcNAc...) asparagine" evidence="4">
    <location>
        <position position="154"/>
    </location>
</feature>
<feature type="glycosylation site" description="N-linked (GlcNAc...) asparagine" evidence="4">
    <location>
        <position position="212"/>
    </location>
</feature>
<feature type="glycosylation site" description="N-linked (GlcNAc...) asparagine" evidence="4">
    <location>
        <position position="343"/>
    </location>
</feature>
<feature type="glycosylation site" description="N-linked (GlcNAc...) asparagine" evidence="4">
    <location>
        <position position="381"/>
    </location>
</feature>
<feature type="disulfide bond" evidence="2">
    <location>
        <begin position="97"/>
        <end position="148"/>
    </location>
</feature>
<feature type="disulfide bond" evidence="2">
    <location>
        <begin position="119"/>
        <end position="184"/>
    </location>
</feature>
<feature type="disulfide bond" evidence="2">
    <location>
        <begin position="128"/>
        <end position="422"/>
    </location>
</feature>
<feature type="disulfide bond" evidence="2">
    <location>
        <begin position="341"/>
        <end position="418"/>
    </location>
</feature>
<dbReference type="EC" id="2.3.1.-" evidence="6"/>
<dbReference type="EMBL" id="MH037024">
    <property type="protein sequence ID" value="AVR54514.1"/>
    <property type="molecule type" value="mRNA"/>
</dbReference>
<dbReference type="EMBL" id="AC133007">
    <property type="protein sequence ID" value="AAO60022.1"/>
    <property type="molecule type" value="Genomic_DNA"/>
</dbReference>
<dbReference type="EMBL" id="DP000009">
    <property type="protein sequence ID" value="ABF99561.1"/>
    <property type="molecule type" value="Genomic_DNA"/>
</dbReference>
<dbReference type="EMBL" id="AP008209">
    <property type="protein sequence ID" value="BAF13617.1"/>
    <property type="molecule type" value="Genomic_DNA"/>
</dbReference>
<dbReference type="EMBL" id="AP014959">
    <property type="protein sequence ID" value="BAS87061.1"/>
    <property type="molecule type" value="Genomic_DNA"/>
</dbReference>
<dbReference type="EMBL" id="AK071479">
    <property type="protein sequence ID" value="BAG92516.1"/>
    <property type="molecule type" value="mRNA"/>
</dbReference>
<dbReference type="RefSeq" id="XP_015629850.1">
    <property type="nucleotide sequence ID" value="XM_015774364.1"/>
</dbReference>
<dbReference type="SMR" id="Q84TW8"/>
<dbReference type="FunCoup" id="Q84TW8">
    <property type="interactions" value="489"/>
</dbReference>
<dbReference type="STRING" id="39947.Q84TW8"/>
<dbReference type="GlyCosmos" id="Q84TW8">
    <property type="glycosylation" value="4 sites, No reported glycans"/>
</dbReference>
<dbReference type="PaxDb" id="39947-Q84TW8"/>
<dbReference type="EnsemblPlants" id="Os03t0817900-01">
    <property type="protein sequence ID" value="Os03t0817900-01"/>
    <property type="gene ID" value="Os03g0817900"/>
</dbReference>
<dbReference type="Gramene" id="Os03t0817900-01">
    <property type="protein sequence ID" value="Os03t0817900-01"/>
    <property type="gene ID" value="Os03g0817900"/>
</dbReference>
<dbReference type="KEGG" id="dosa:Os03g0817900"/>
<dbReference type="eggNOG" id="ENOG502QTQP">
    <property type="taxonomic scope" value="Eukaryota"/>
</dbReference>
<dbReference type="HOGENOM" id="CLU_020953_3_1_1"/>
<dbReference type="InParanoid" id="Q84TW8"/>
<dbReference type="OMA" id="WVENNMN"/>
<dbReference type="OrthoDB" id="1932925at2759"/>
<dbReference type="Proteomes" id="UP000000763">
    <property type="component" value="Chromosome 3"/>
</dbReference>
<dbReference type="Proteomes" id="UP000059680">
    <property type="component" value="Chromosome 3"/>
</dbReference>
<dbReference type="GO" id="GO:0005794">
    <property type="term" value="C:Golgi apparatus"/>
    <property type="evidence" value="ECO:0000318"/>
    <property type="project" value="GO_Central"/>
</dbReference>
<dbReference type="GO" id="GO:0000139">
    <property type="term" value="C:Golgi membrane"/>
    <property type="evidence" value="ECO:0000250"/>
    <property type="project" value="UniProtKB"/>
</dbReference>
<dbReference type="GO" id="GO:0016413">
    <property type="term" value="F:O-acetyltransferase activity"/>
    <property type="evidence" value="ECO:0000318"/>
    <property type="project" value="GO_Central"/>
</dbReference>
<dbReference type="GO" id="GO:1990538">
    <property type="term" value="F:xylan O-acetyltransferase activity"/>
    <property type="evidence" value="ECO:0000314"/>
    <property type="project" value="UniProtKB"/>
</dbReference>
<dbReference type="GO" id="GO:1990937">
    <property type="term" value="P:xylan acetylation"/>
    <property type="evidence" value="ECO:0000314"/>
    <property type="project" value="UniProtKB"/>
</dbReference>
<dbReference type="InterPro" id="IPR029962">
    <property type="entry name" value="TBL"/>
</dbReference>
<dbReference type="InterPro" id="IPR026057">
    <property type="entry name" value="TBL_C"/>
</dbReference>
<dbReference type="InterPro" id="IPR025846">
    <property type="entry name" value="TBL_N"/>
</dbReference>
<dbReference type="PANTHER" id="PTHR32285:SF62">
    <property type="entry name" value="PROTEIN TRICHOME BIREFRINGENCE-LIKE 33"/>
    <property type="match status" value="1"/>
</dbReference>
<dbReference type="PANTHER" id="PTHR32285">
    <property type="entry name" value="PROTEIN TRICHOME BIREFRINGENCE-LIKE 9-RELATED"/>
    <property type="match status" value="1"/>
</dbReference>
<dbReference type="Pfam" id="PF13839">
    <property type="entry name" value="PC-Esterase"/>
    <property type="match status" value="1"/>
</dbReference>
<dbReference type="Pfam" id="PF14416">
    <property type="entry name" value="PMR5N"/>
    <property type="match status" value="1"/>
</dbReference>
<accession>Q84TW8</accession>
<accession>A0A0P0W4X3</accession>
<organism>
    <name type="scientific">Oryza sativa subsp. japonica</name>
    <name type="common">Rice</name>
    <dbReference type="NCBI Taxonomy" id="39947"/>
    <lineage>
        <taxon>Eukaryota</taxon>
        <taxon>Viridiplantae</taxon>
        <taxon>Streptophyta</taxon>
        <taxon>Embryophyta</taxon>
        <taxon>Tracheophyta</taxon>
        <taxon>Spermatophyta</taxon>
        <taxon>Magnoliopsida</taxon>
        <taxon>Liliopsida</taxon>
        <taxon>Poales</taxon>
        <taxon>Poaceae</taxon>
        <taxon>BOP clade</taxon>
        <taxon>Oryzoideae</taxon>
        <taxon>Oryzeae</taxon>
        <taxon>Oryzinae</taxon>
        <taxon>Oryza</taxon>
        <taxon>Oryza sativa</taxon>
    </lineage>
</organism>
<keyword id="KW-1015">Disulfide bond</keyword>
<keyword id="KW-0325">Glycoprotein</keyword>
<keyword id="KW-0333">Golgi apparatus</keyword>
<keyword id="KW-0472">Membrane</keyword>
<keyword id="KW-1185">Reference proteome</keyword>
<keyword id="KW-0735">Signal-anchor</keyword>
<keyword id="KW-0808">Transferase</keyword>
<keyword id="KW-0812">Transmembrane</keyword>
<keyword id="KW-1133">Transmembrane helix</keyword>
<evidence type="ECO:0000250" key="1">
    <source>
        <dbReference type="UniProtKB" id="Q2QYU2"/>
    </source>
</evidence>
<evidence type="ECO:0000250" key="2">
    <source>
        <dbReference type="UniProtKB" id="Q9LY46"/>
    </source>
</evidence>
<evidence type="ECO:0000255" key="3"/>
<evidence type="ECO:0000255" key="4">
    <source>
        <dbReference type="PROSITE-ProRule" id="PRU00498"/>
    </source>
</evidence>
<evidence type="ECO:0000256" key="5">
    <source>
        <dbReference type="SAM" id="MobiDB-lite"/>
    </source>
</evidence>
<evidence type="ECO:0000269" key="6">
    <source>
    </source>
</evidence>
<evidence type="ECO:0000303" key="7">
    <source>
    </source>
</evidence>
<evidence type="ECO:0000303" key="8">
    <source>
    </source>
</evidence>
<evidence type="ECO:0000305" key="9"/>
<evidence type="ECO:0000305" key="10">
    <source>
    </source>
</evidence>
<evidence type="ECO:0000312" key="11">
    <source>
        <dbReference type="EMBL" id="AAO60022.1"/>
    </source>
</evidence>
<evidence type="ECO:0000312" key="12">
    <source>
        <dbReference type="EMBL" id="ABF99561.1"/>
    </source>
</evidence>
<evidence type="ECO:0000312" key="13">
    <source>
        <dbReference type="EMBL" id="BAS87061.1"/>
    </source>
</evidence>
<protein>
    <recommendedName>
        <fullName evidence="8">Probable xylan O-acetyltransferase 10</fullName>
        <ecNumber evidence="6">2.3.1.-</ecNumber>
    </recommendedName>
    <alternativeName>
        <fullName evidence="7">Protein trichome birefringence-like 5</fullName>
        <shortName evidence="7">OsTBL5</shortName>
    </alternativeName>
</protein>
<name>XOATA_ORYSJ</name>
<reference key="1">
    <citation type="journal article" date="2018" name="Planta">
        <title>Biochemical characterization of rice xylan O-acetyltransferases.</title>
        <authorList>
            <person name="Zhong R."/>
            <person name="Cui D."/>
            <person name="Dasher R.L."/>
            <person name="Ye Z.H."/>
        </authorList>
    </citation>
    <scope>NUCLEOTIDE SEQUENCE [MRNA]</scope>
    <scope>FUNCTION</scope>
    <scope>CATALYTIC ACTIVITY</scope>
    <scope>TISSUE SPECIFICITY</scope>
</reference>
<reference key="2">
    <citation type="journal article" date="2005" name="Genome Res.">
        <title>Sequence, annotation, and analysis of synteny between rice chromosome 3 and diverged grass species.</title>
        <authorList>
            <consortium name="The rice chromosome 3 sequencing consortium"/>
            <person name="Buell C.R."/>
            <person name="Yuan Q."/>
            <person name="Ouyang S."/>
            <person name="Liu J."/>
            <person name="Zhu W."/>
            <person name="Wang A."/>
            <person name="Maiti R."/>
            <person name="Haas B."/>
            <person name="Wortman J."/>
            <person name="Pertea M."/>
            <person name="Jones K.M."/>
            <person name="Kim M."/>
            <person name="Overton L."/>
            <person name="Tsitrin T."/>
            <person name="Fadrosh D."/>
            <person name="Bera J."/>
            <person name="Weaver B."/>
            <person name="Jin S."/>
            <person name="Johri S."/>
            <person name="Reardon M."/>
            <person name="Webb K."/>
            <person name="Hill J."/>
            <person name="Moffat K."/>
            <person name="Tallon L."/>
            <person name="Van Aken S."/>
            <person name="Lewis M."/>
            <person name="Utterback T."/>
            <person name="Feldblyum T."/>
            <person name="Zismann V."/>
            <person name="Iobst S."/>
            <person name="Hsiao J."/>
            <person name="de Vazeille A.R."/>
            <person name="Salzberg S.L."/>
            <person name="White O."/>
            <person name="Fraser C.M."/>
            <person name="Yu Y."/>
            <person name="Kim H."/>
            <person name="Rambo T."/>
            <person name="Currie J."/>
            <person name="Collura K."/>
            <person name="Kernodle-Thompson S."/>
            <person name="Wei F."/>
            <person name="Kudrna K."/>
            <person name="Ammiraju J.S.S."/>
            <person name="Luo M."/>
            <person name="Goicoechea J.L."/>
            <person name="Wing R.A."/>
            <person name="Henry D."/>
            <person name="Oates R."/>
            <person name="Palmer M."/>
            <person name="Pries G."/>
            <person name="Saski C."/>
            <person name="Simmons J."/>
            <person name="Soderlund C."/>
            <person name="Nelson W."/>
            <person name="de la Bastide M."/>
            <person name="Spiegel L."/>
            <person name="Nascimento L."/>
            <person name="Huang E."/>
            <person name="Preston R."/>
            <person name="Zutavern T."/>
            <person name="Palmer L."/>
            <person name="O'Shaughnessy A."/>
            <person name="Dike S."/>
            <person name="McCombie W.R."/>
            <person name="Minx P."/>
            <person name="Cordum H."/>
            <person name="Wilson R."/>
            <person name="Jin W."/>
            <person name="Lee H.R."/>
            <person name="Jiang J."/>
            <person name="Jackson S."/>
        </authorList>
    </citation>
    <scope>NUCLEOTIDE SEQUENCE [LARGE SCALE GENOMIC DNA]</scope>
    <source>
        <strain>cv. Nipponbare</strain>
    </source>
</reference>
<reference key="3">
    <citation type="journal article" date="2005" name="Nature">
        <title>The map-based sequence of the rice genome.</title>
        <authorList>
            <consortium name="International rice genome sequencing project (IRGSP)"/>
        </authorList>
    </citation>
    <scope>NUCLEOTIDE SEQUENCE [LARGE SCALE GENOMIC DNA]</scope>
    <source>
        <strain>cv. Nipponbare</strain>
    </source>
</reference>
<reference key="4">
    <citation type="journal article" date="2008" name="Nucleic Acids Res.">
        <title>The rice annotation project database (RAP-DB): 2008 update.</title>
        <authorList>
            <consortium name="The rice annotation project (RAP)"/>
        </authorList>
    </citation>
    <scope>GENOME REANNOTATION</scope>
    <source>
        <strain>cv. Nipponbare</strain>
    </source>
</reference>
<reference key="5">
    <citation type="journal article" date="2013" name="Rice">
        <title>Improvement of the Oryza sativa Nipponbare reference genome using next generation sequence and optical map data.</title>
        <authorList>
            <person name="Kawahara Y."/>
            <person name="de la Bastide M."/>
            <person name="Hamilton J.P."/>
            <person name="Kanamori H."/>
            <person name="McCombie W.R."/>
            <person name="Ouyang S."/>
            <person name="Schwartz D.C."/>
            <person name="Tanaka T."/>
            <person name="Wu J."/>
            <person name="Zhou S."/>
            <person name="Childs K.L."/>
            <person name="Davidson R.M."/>
            <person name="Lin H."/>
            <person name="Quesada-Ocampo L."/>
            <person name="Vaillancourt B."/>
            <person name="Sakai H."/>
            <person name="Lee S.S."/>
            <person name="Kim J."/>
            <person name="Numa H."/>
            <person name="Itoh T."/>
            <person name="Buell C.R."/>
            <person name="Matsumoto T."/>
        </authorList>
    </citation>
    <scope>GENOME REANNOTATION</scope>
    <source>
        <strain>cv. Nipponbare</strain>
    </source>
</reference>
<reference key="6">
    <citation type="journal article" date="2003" name="Science">
        <title>Collection, mapping, and annotation of over 28,000 cDNA clones from japonica rice.</title>
        <authorList>
            <consortium name="The rice full-length cDNA consortium"/>
        </authorList>
    </citation>
    <scope>NUCLEOTIDE SEQUENCE [LARGE SCALE MRNA]</scope>
    <source>
        <strain>cv. Nipponbare</strain>
    </source>
</reference>
<reference key="7">
    <citation type="journal article" date="2017" name="Plant Physiol.">
        <title>Two trichome birefringence-like proteins mediate xylan acetylation, which is essential for leaf blight resistance in rice.</title>
        <authorList>
            <person name="Gao Y."/>
            <person name="He C."/>
            <person name="Zhang D."/>
            <person name="Liu X."/>
            <person name="Xu Z."/>
            <person name="Tian Y."/>
            <person name="Liu X.H."/>
            <person name="Zang S."/>
            <person name="Pauly M."/>
            <person name="Zhou Y."/>
            <person name="Zhang B."/>
        </authorList>
    </citation>
    <scope>GENE FAMILY</scope>
    <scope>NOMENCLATURE</scope>
</reference>
<proteinExistence type="evidence at protein level"/>
<comment type="function">
    <text evidence="6">Probable xylan acetyltransferase required for 2-O- and 3-O-monoacetylation of xylosyl residues in xylan (PubMed:29569182). Possesses extremely low activity in vitro (PubMed:29569182).</text>
</comment>
<comment type="subcellular location">
    <subcellularLocation>
        <location evidence="1">Golgi apparatus membrane</location>
        <topology evidence="3">Single-pass type II membrane protein</topology>
    </subcellularLocation>
</comment>
<comment type="tissue specificity">
    <text evidence="6">Expressed in roots, leaves and stems.</text>
</comment>
<comment type="similarity">
    <text evidence="9">Belongs to the PC-esterase family. TBL subfamily.</text>
</comment>
<gene>
    <name evidence="8" type="primary">XOAT10</name>
    <name evidence="7" type="synonym">TBL5</name>
    <name evidence="13" type="ordered locus">Os03g0817900</name>
    <name evidence="12" type="ordered locus">LOC_Os03g60350</name>
    <name evidence="11" type="ORF">OSJNBa0094J08.9</name>
</gene>
<sequence length="441" mass="49944">MMKPQHGGMAGHGGGRTRSPFLTSYALTLAFITFVSVLYFKDFSSTLHQPFLTRPPPHRRQIARPRAPSHHHGGGSSSGGGDVVPPFAVGAAAAAGCDVGVGEWVYDEAARPWYEEEECPYIQPQLTCQAHGRPDTAYQHWRWQPRGCSLPSFNATLMLEMLRGKRMMFVGDSLNRGQYVSLVCLLHRSIPESSKSMETFDSLTVFRAKNYNATIEFYWAPFLAESNSDDAVVHRIADRIVRGTALEKHARFWKGADILVFNSYLWWMTGQKMKILQGSFEDKSKDIVEMETEEAYGMVLNAVVRWVENNMNPRNSRVFFVTMSPTHTRSKDWGDDSDGNCYNQTTPIRDLSYWGPGTSKGLMRVIGEVFSTSKVPVGIVNITQLSEYRKDAHTQIYKKQWNPLTPEQIANPKSYADCTHWCLPGLQDTWNELLYSKLFFP</sequence>